<protein>
    <recommendedName>
        <fullName evidence="1">S-adenosylmethionine synthase</fullName>
        <shortName evidence="1">AdoMet synthase</shortName>
        <ecNumber evidence="1">2.5.1.6</ecNumber>
    </recommendedName>
    <alternativeName>
        <fullName evidence="1">MAT</fullName>
    </alternativeName>
    <alternativeName>
        <fullName evidence="1">Methionine adenosyltransferase</fullName>
    </alternativeName>
</protein>
<accession>B2UD22</accession>
<organism>
    <name type="scientific">Ralstonia pickettii (strain 12J)</name>
    <dbReference type="NCBI Taxonomy" id="402626"/>
    <lineage>
        <taxon>Bacteria</taxon>
        <taxon>Pseudomonadati</taxon>
        <taxon>Pseudomonadota</taxon>
        <taxon>Betaproteobacteria</taxon>
        <taxon>Burkholderiales</taxon>
        <taxon>Burkholderiaceae</taxon>
        <taxon>Ralstonia</taxon>
    </lineage>
</organism>
<name>METK_RALPJ</name>
<proteinExistence type="inferred from homology"/>
<feature type="chain" id="PRO_1000093075" description="S-adenosylmethionine synthase">
    <location>
        <begin position="1"/>
        <end position="396"/>
    </location>
</feature>
<feature type="region of interest" description="Flexible loop" evidence="1">
    <location>
        <begin position="100"/>
        <end position="110"/>
    </location>
</feature>
<feature type="binding site" description="in other chain" evidence="1">
    <location>
        <position position="16"/>
    </location>
    <ligand>
        <name>ATP</name>
        <dbReference type="ChEBI" id="CHEBI:30616"/>
        <note>ligand shared between two neighboring subunits</note>
    </ligand>
</feature>
<feature type="binding site" evidence="1">
    <location>
        <position position="18"/>
    </location>
    <ligand>
        <name>Mg(2+)</name>
        <dbReference type="ChEBI" id="CHEBI:18420"/>
    </ligand>
</feature>
<feature type="binding site" evidence="1">
    <location>
        <position position="44"/>
    </location>
    <ligand>
        <name>K(+)</name>
        <dbReference type="ChEBI" id="CHEBI:29103"/>
    </ligand>
</feature>
<feature type="binding site" description="in other chain" evidence="1">
    <location>
        <position position="57"/>
    </location>
    <ligand>
        <name>L-methionine</name>
        <dbReference type="ChEBI" id="CHEBI:57844"/>
        <note>ligand shared between two neighboring subunits</note>
    </ligand>
</feature>
<feature type="binding site" description="in other chain" evidence="1">
    <location>
        <position position="100"/>
    </location>
    <ligand>
        <name>L-methionine</name>
        <dbReference type="ChEBI" id="CHEBI:57844"/>
        <note>ligand shared between two neighboring subunits</note>
    </ligand>
</feature>
<feature type="binding site" description="in other chain" evidence="1">
    <location>
        <begin position="167"/>
        <end position="169"/>
    </location>
    <ligand>
        <name>ATP</name>
        <dbReference type="ChEBI" id="CHEBI:30616"/>
        <note>ligand shared between two neighboring subunits</note>
    </ligand>
</feature>
<feature type="binding site" description="in other chain" evidence="1">
    <location>
        <begin position="232"/>
        <end position="233"/>
    </location>
    <ligand>
        <name>ATP</name>
        <dbReference type="ChEBI" id="CHEBI:30616"/>
        <note>ligand shared between two neighboring subunits</note>
    </ligand>
</feature>
<feature type="binding site" evidence="1">
    <location>
        <position position="241"/>
    </location>
    <ligand>
        <name>ATP</name>
        <dbReference type="ChEBI" id="CHEBI:30616"/>
        <note>ligand shared between two neighboring subunits</note>
    </ligand>
</feature>
<feature type="binding site" evidence="1">
    <location>
        <position position="241"/>
    </location>
    <ligand>
        <name>L-methionine</name>
        <dbReference type="ChEBI" id="CHEBI:57844"/>
        <note>ligand shared between two neighboring subunits</note>
    </ligand>
</feature>
<feature type="binding site" description="in other chain" evidence="1">
    <location>
        <begin position="247"/>
        <end position="248"/>
    </location>
    <ligand>
        <name>ATP</name>
        <dbReference type="ChEBI" id="CHEBI:30616"/>
        <note>ligand shared between two neighboring subunits</note>
    </ligand>
</feature>
<feature type="binding site" evidence="1">
    <location>
        <position position="264"/>
    </location>
    <ligand>
        <name>ATP</name>
        <dbReference type="ChEBI" id="CHEBI:30616"/>
        <note>ligand shared between two neighboring subunits</note>
    </ligand>
</feature>
<feature type="binding site" evidence="1">
    <location>
        <position position="268"/>
    </location>
    <ligand>
        <name>ATP</name>
        <dbReference type="ChEBI" id="CHEBI:30616"/>
        <note>ligand shared between two neighboring subunits</note>
    </ligand>
</feature>
<feature type="binding site" description="in other chain" evidence="1">
    <location>
        <position position="272"/>
    </location>
    <ligand>
        <name>L-methionine</name>
        <dbReference type="ChEBI" id="CHEBI:57844"/>
        <note>ligand shared between two neighboring subunits</note>
    </ligand>
</feature>
<gene>
    <name evidence="1" type="primary">metK</name>
    <name type="ordered locus">Rpic_0036</name>
</gene>
<evidence type="ECO:0000255" key="1">
    <source>
        <dbReference type="HAMAP-Rule" id="MF_00086"/>
    </source>
</evidence>
<dbReference type="EC" id="2.5.1.6" evidence="1"/>
<dbReference type="EMBL" id="CP001068">
    <property type="protein sequence ID" value="ACD25201.1"/>
    <property type="molecule type" value="Genomic_DNA"/>
</dbReference>
<dbReference type="SMR" id="B2UD22"/>
<dbReference type="STRING" id="402626.Rpic_0036"/>
<dbReference type="KEGG" id="rpi:Rpic_0036"/>
<dbReference type="eggNOG" id="COG0192">
    <property type="taxonomic scope" value="Bacteria"/>
</dbReference>
<dbReference type="HOGENOM" id="CLU_041802_1_1_4"/>
<dbReference type="UniPathway" id="UPA00315">
    <property type="reaction ID" value="UER00080"/>
</dbReference>
<dbReference type="GO" id="GO:0005737">
    <property type="term" value="C:cytoplasm"/>
    <property type="evidence" value="ECO:0007669"/>
    <property type="project" value="UniProtKB-SubCell"/>
</dbReference>
<dbReference type="GO" id="GO:0005524">
    <property type="term" value="F:ATP binding"/>
    <property type="evidence" value="ECO:0007669"/>
    <property type="project" value="UniProtKB-UniRule"/>
</dbReference>
<dbReference type="GO" id="GO:0000287">
    <property type="term" value="F:magnesium ion binding"/>
    <property type="evidence" value="ECO:0007669"/>
    <property type="project" value="UniProtKB-UniRule"/>
</dbReference>
<dbReference type="GO" id="GO:0004478">
    <property type="term" value="F:methionine adenosyltransferase activity"/>
    <property type="evidence" value="ECO:0007669"/>
    <property type="project" value="UniProtKB-UniRule"/>
</dbReference>
<dbReference type="GO" id="GO:0006730">
    <property type="term" value="P:one-carbon metabolic process"/>
    <property type="evidence" value="ECO:0007669"/>
    <property type="project" value="UniProtKB-KW"/>
</dbReference>
<dbReference type="GO" id="GO:0006556">
    <property type="term" value="P:S-adenosylmethionine biosynthetic process"/>
    <property type="evidence" value="ECO:0007669"/>
    <property type="project" value="UniProtKB-UniRule"/>
</dbReference>
<dbReference type="CDD" id="cd18079">
    <property type="entry name" value="S-AdoMet_synt"/>
    <property type="match status" value="1"/>
</dbReference>
<dbReference type="FunFam" id="3.30.300.10:FF:000003">
    <property type="entry name" value="S-adenosylmethionine synthase"/>
    <property type="match status" value="1"/>
</dbReference>
<dbReference type="FunFam" id="3.30.300.10:FF:000004">
    <property type="entry name" value="S-adenosylmethionine synthase"/>
    <property type="match status" value="1"/>
</dbReference>
<dbReference type="Gene3D" id="3.30.300.10">
    <property type="match status" value="3"/>
</dbReference>
<dbReference type="HAMAP" id="MF_00086">
    <property type="entry name" value="S_AdoMet_synth1"/>
    <property type="match status" value="1"/>
</dbReference>
<dbReference type="InterPro" id="IPR022631">
    <property type="entry name" value="ADOMET_SYNTHASE_CS"/>
</dbReference>
<dbReference type="InterPro" id="IPR022630">
    <property type="entry name" value="S-AdoMet_synt_C"/>
</dbReference>
<dbReference type="InterPro" id="IPR022629">
    <property type="entry name" value="S-AdoMet_synt_central"/>
</dbReference>
<dbReference type="InterPro" id="IPR022628">
    <property type="entry name" value="S-AdoMet_synt_N"/>
</dbReference>
<dbReference type="InterPro" id="IPR002133">
    <property type="entry name" value="S-AdoMet_synthetase"/>
</dbReference>
<dbReference type="InterPro" id="IPR022636">
    <property type="entry name" value="S-AdoMet_synthetase_sfam"/>
</dbReference>
<dbReference type="NCBIfam" id="TIGR01034">
    <property type="entry name" value="metK"/>
    <property type="match status" value="1"/>
</dbReference>
<dbReference type="PANTHER" id="PTHR11964">
    <property type="entry name" value="S-ADENOSYLMETHIONINE SYNTHETASE"/>
    <property type="match status" value="1"/>
</dbReference>
<dbReference type="Pfam" id="PF02773">
    <property type="entry name" value="S-AdoMet_synt_C"/>
    <property type="match status" value="1"/>
</dbReference>
<dbReference type="Pfam" id="PF02772">
    <property type="entry name" value="S-AdoMet_synt_M"/>
    <property type="match status" value="1"/>
</dbReference>
<dbReference type="Pfam" id="PF00438">
    <property type="entry name" value="S-AdoMet_synt_N"/>
    <property type="match status" value="1"/>
</dbReference>
<dbReference type="PIRSF" id="PIRSF000497">
    <property type="entry name" value="MAT"/>
    <property type="match status" value="1"/>
</dbReference>
<dbReference type="SUPFAM" id="SSF55973">
    <property type="entry name" value="S-adenosylmethionine synthetase"/>
    <property type="match status" value="3"/>
</dbReference>
<dbReference type="PROSITE" id="PS00376">
    <property type="entry name" value="ADOMET_SYNTHASE_1"/>
    <property type="match status" value="1"/>
</dbReference>
<dbReference type="PROSITE" id="PS00377">
    <property type="entry name" value="ADOMET_SYNTHASE_2"/>
    <property type="match status" value="1"/>
</dbReference>
<comment type="function">
    <text evidence="1">Catalyzes the formation of S-adenosylmethionine (AdoMet) from methionine and ATP. The overall synthetic reaction is composed of two sequential steps, AdoMet formation and the subsequent tripolyphosphate hydrolysis which occurs prior to release of AdoMet from the enzyme.</text>
</comment>
<comment type="catalytic activity">
    <reaction evidence="1">
        <text>L-methionine + ATP + H2O = S-adenosyl-L-methionine + phosphate + diphosphate</text>
        <dbReference type="Rhea" id="RHEA:21080"/>
        <dbReference type="ChEBI" id="CHEBI:15377"/>
        <dbReference type="ChEBI" id="CHEBI:30616"/>
        <dbReference type="ChEBI" id="CHEBI:33019"/>
        <dbReference type="ChEBI" id="CHEBI:43474"/>
        <dbReference type="ChEBI" id="CHEBI:57844"/>
        <dbReference type="ChEBI" id="CHEBI:59789"/>
        <dbReference type="EC" id="2.5.1.6"/>
    </reaction>
</comment>
<comment type="cofactor">
    <cofactor evidence="1">
        <name>Mg(2+)</name>
        <dbReference type="ChEBI" id="CHEBI:18420"/>
    </cofactor>
    <text evidence="1">Binds 2 divalent ions per subunit.</text>
</comment>
<comment type="cofactor">
    <cofactor evidence="1">
        <name>K(+)</name>
        <dbReference type="ChEBI" id="CHEBI:29103"/>
    </cofactor>
    <text evidence="1">Binds 1 potassium ion per subunit.</text>
</comment>
<comment type="pathway">
    <text evidence="1">Amino-acid biosynthesis; S-adenosyl-L-methionine biosynthesis; S-adenosyl-L-methionine from L-methionine: step 1/1.</text>
</comment>
<comment type="subunit">
    <text evidence="1">Homotetramer; dimer of dimers.</text>
</comment>
<comment type="subcellular location">
    <subcellularLocation>
        <location evidence="1">Cytoplasm</location>
    </subcellularLocation>
</comment>
<comment type="similarity">
    <text evidence="1">Belongs to the AdoMet synthase family.</text>
</comment>
<keyword id="KW-0067">ATP-binding</keyword>
<keyword id="KW-0963">Cytoplasm</keyword>
<keyword id="KW-0460">Magnesium</keyword>
<keyword id="KW-0479">Metal-binding</keyword>
<keyword id="KW-0547">Nucleotide-binding</keyword>
<keyword id="KW-0554">One-carbon metabolism</keyword>
<keyword id="KW-0630">Potassium</keyword>
<keyword id="KW-0808">Transferase</keyword>
<sequence>MSNDFLFTSESVSEGHPDKVADQISDAILDAILAQDKYARVAAETLCNTGLVVLAGEITTTANVDYIHVARETIKRIGYDNTEYGIDYKGCAVLVAYDKQSPDIAQGVDRASDDYLNQGAGDQGLMFGYACDETPELMPFPIYYAHRLVERQSQLRRDGRLPWLRPDAKSQVTVRYVDGKPHSVDTVVLSTQHAPEMSQEAIREAVIEEIIKPVLPSHMLAETKYLVNPTGRFVIGGPQGDCGLTGRKIIVDTYGGAAPHGGGAFSGKDPSKVDRSAAYAARYVAKNVVAAGLARQCQVQVSYAIGVARPINITVYTEGTGVIPDEQIAKLVQEHFDLRPKGIVQMLDLLRPVYEKTAAYGHFGREEPEFSWEATDKVLLLREAAGLAGEPAKAFA</sequence>
<reference key="1">
    <citation type="submission" date="2008-05" db="EMBL/GenBank/DDBJ databases">
        <title>Complete sequence of chromosome 1 of Ralstonia pickettii 12J.</title>
        <authorList>
            <person name="Lucas S."/>
            <person name="Copeland A."/>
            <person name="Lapidus A."/>
            <person name="Glavina del Rio T."/>
            <person name="Dalin E."/>
            <person name="Tice H."/>
            <person name="Bruce D."/>
            <person name="Goodwin L."/>
            <person name="Pitluck S."/>
            <person name="Meincke L."/>
            <person name="Brettin T."/>
            <person name="Detter J.C."/>
            <person name="Han C."/>
            <person name="Kuske C.R."/>
            <person name="Schmutz J."/>
            <person name="Larimer F."/>
            <person name="Land M."/>
            <person name="Hauser L."/>
            <person name="Kyrpides N."/>
            <person name="Mikhailova N."/>
            <person name="Marsh T."/>
            <person name="Richardson P."/>
        </authorList>
    </citation>
    <scope>NUCLEOTIDE SEQUENCE [LARGE SCALE GENOMIC DNA]</scope>
    <source>
        <strain>12J</strain>
    </source>
</reference>